<keyword id="KW-0106">Calcium</keyword>
<keyword id="KW-0256">Endoplasmic reticulum</keyword>
<keyword id="KW-0325">Glycoprotein</keyword>
<keyword id="KW-0413">Isomerase</keyword>
<keyword id="KW-0479">Metal-binding</keyword>
<keyword id="KW-1185">Reference proteome</keyword>
<keyword id="KW-0677">Repeat</keyword>
<keyword id="KW-0697">Rotamase</keyword>
<keyword id="KW-0732">Signal</keyword>
<dbReference type="EC" id="5.2.1.8"/>
<dbReference type="EMBL" id="BC105407">
    <property type="protein sequence ID" value="AAI05408.1"/>
    <property type="molecule type" value="mRNA"/>
</dbReference>
<dbReference type="RefSeq" id="NP_001039837.1">
    <property type="nucleotide sequence ID" value="NM_001046372.2"/>
</dbReference>
<dbReference type="SMR" id="Q2KJC8"/>
<dbReference type="FunCoup" id="Q2KJC8">
    <property type="interactions" value="679"/>
</dbReference>
<dbReference type="STRING" id="9913.ENSBTAP00000033613"/>
<dbReference type="GlyCosmos" id="Q2KJC8">
    <property type="glycosylation" value="4 sites, No reported glycans"/>
</dbReference>
<dbReference type="GlyGen" id="Q2KJC8">
    <property type="glycosylation" value="4 sites"/>
</dbReference>
<dbReference type="PaxDb" id="9913-ENSBTAP00000033613"/>
<dbReference type="PeptideAtlas" id="Q2KJC8"/>
<dbReference type="Ensembl" id="ENSBTAT00000033703.2">
    <property type="protein sequence ID" value="ENSBTAP00000033613.1"/>
    <property type="gene ID" value="ENSBTAG00000016707.5"/>
</dbReference>
<dbReference type="GeneID" id="534182"/>
<dbReference type="KEGG" id="bta:534182"/>
<dbReference type="CTD" id="11328"/>
<dbReference type="VEuPathDB" id="HostDB:ENSBTAG00000016707"/>
<dbReference type="VGNC" id="VGNC:29027">
    <property type="gene designation" value="FKBP9"/>
</dbReference>
<dbReference type="eggNOG" id="KOG0549">
    <property type="taxonomic scope" value="Eukaryota"/>
</dbReference>
<dbReference type="GeneTree" id="ENSGT00940000157125"/>
<dbReference type="HOGENOM" id="CLU_034907_0_0_1"/>
<dbReference type="InParanoid" id="Q2KJC8"/>
<dbReference type="OMA" id="TVTYKPE"/>
<dbReference type="OrthoDB" id="1902587at2759"/>
<dbReference type="TreeFam" id="TF105296"/>
<dbReference type="Proteomes" id="UP000009136">
    <property type="component" value="Chromosome 4"/>
</dbReference>
<dbReference type="Bgee" id="ENSBTAG00000016707">
    <property type="expression patterns" value="Expressed in uterine horn and 102 other cell types or tissues"/>
</dbReference>
<dbReference type="GO" id="GO:0005783">
    <property type="term" value="C:endoplasmic reticulum"/>
    <property type="evidence" value="ECO:0000318"/>
    <property type="project" value="GO_Central"/>
</dbReference>
<dbReference type="GO" id="GO:0005509">
    <property type="term" value="F:calcium ion binding"/>
    <property type="evidence" value="ECO:0007669"/>
    <property type="project" value="InterPro"/>
</dbReference>
<dbReference type="GO" id="GO:0003755">
    <property type="term" value="F:peptidyl-prolyl cis-trans isomerase activity"/>
    <property type="evidence" value="ECO:0000318"/>
    <property type="project" value="GO_Central"/>
</dbReference>
<dbReference type="GO" id="GO:0006457">
    <property type="term" value="P:protein folding"/>
    <property type="evidence" value="ECO:0000318"/>
    <property type="project" value="GO_Central"/>
</dbReference>
<dbReference type="CDD" id="cd00051">
    <property type="entry name" value="EFh"/>
    <property type="match status" value="1"/>
</dbReference>
<dbReference type="FunFam" id="1.10.238.10:FF:000102">
    <property type="entry name" value="Peptidylprolyl isomerase"/>
    <property type="match status" value="1"/>
</dbReference>
<dbReference type="FunFam" id="3.10.50.40:FF:000002">
    <property type="entry name" value="Peptidylprolyl isomerase"/>
    <property type="match status" value="4"/>
</dbReference>
<dbReference type="Gene3D" id="3.10.50.40">
    <property type="match status" value="4"/>
</dbReference>
<dbReference type="Gene3D" id="1.10.238.10">
    <property type="entry name" value="EF-hand"/>
    <property type="match status" value="1"/>
</dbReference>
<dbReference type="InterPro" id="IPR011992">
    <property type="entry name" value="EF-hand-dom_pair"/>
</dbReference>
<dbReference type="InterPro" id="IPR018247">
    <property type="entry name" value="EF_Hand_1_Ca_BS"/>
</dbReference>
<dbReference type="InterPro" id="IPR002048">
    <property type="entry name" value="EF_hand_dom"/>
</dbReference>
<dbReference type="InterPro" id="IPR051989">
    <property type="entry name" value="FKBP-like_isomerase"/>
</dbReference>
<dbReference type="InterPro" id="IPR046357">
    <property type="entry name" value="PPIase_dom_sf"/>
</dbReference>
<dbReference type="InterPro" id="IPR001179">
    <property type="entry name" value="PPIase_FKBP_dom"/>
</dbReference>
<dbReference type="PANTHER" id="PTHR46046:SF2">
    <property type="entry name" value="PEPTIDYL-PROLYL CIS-TRANS ISOMERASE FKBP9"/>
    <property type="match status" value="1"/>
</dbReference>
<dbReference type="PANTHER" id="PTHR46046">
    <property type="entry name" value="PEPTIDYLPROLYL ISOMERASE"/>
    <property type="match status" value="1"/>
</dbReference>
<dbReference type="Pfam" id="PF00254">
    <property type="entry name" value="FKBP_C"/>
    <property type="match status" value="4"/>
</dbReference>
<dbReference type="SMART" id="SM00054">
    <property type="entry name" value="EFh"/>
    <property type="match status" value="2"/>
</dbReference>
<dbReference type="SUPFAM" id="SSF47473">
    <property type="entry name" value="EF-hand"/>
    <property type="match status" value="1"/>
</dbReference>
<dbReference type="SUPFAM" id="SSF54534">
    <property type="entry name" value="FKBP-like"/>
    <property type="match status" value="4"/>
</dbReference>
<dbReference type="PROSITE" id="PS00018">
    <property type="entry name" value="EF_HAND_1"/>
    <property type="match status" value="1"/>
</dbReference>
<dbReference type="PROSITE" id="PS50222">
    <property type="entry name" value="EF_HAND_2"/>
    <property type="match status" value="2"/>
</dbReference>
<dbReference type="PROSITE" id="PS00014">
    <property type="entry name" value="ER_TARGET"/>
    <property type="match status" value="1"/>
</dbReference>
<dbReference type="PROSITE" id="PS50059">
    <property type="entry name" value="FKBP_PPIASE"/>
    <property type="match status" value="4"/>
</dbReference>
<accession>Q2KJC8</accession>
<gene>
    <name type="primary">FKBP9</name>
</gene>
<evidence type="ECO:0000250" key="1"/>
<evidence type="ECO:0000255" key="2"/>
<evidence type="ECO:0000255" key="3">
    <source>
        <dbReference type="PROSITE-ProRule" id="PRU00277"/>
    </source>
</evidence>
<evidence type="ECO:0000255" key="4">
    <source>
        <dbReference type="PROSITE-ProRule" id="PRU00448"/>
    </source>
</evidence>
<evidence type="ECO:0000255" key="5">
    <source>
        <dbReference type="PROSITE-ProRule" id="PRU10138"/>
    </source>
</evidence>
<evidence type="ECO:0000305" key="6"/>
<feature type="signal peptide" evidence="2">
    <location>
        <begin position="1"/>
        <end position="26"/>
    </location>
</feature>
<feature type="chain" id="PRO_0000239738" description="Peptidyl-prolyl cis-trans isomerase FKBP9">
    <location>
        <begin position="27"/>
        <end position="574"/>
    </location>
</feature>
<feature type="domain" description="PPIase FKBP-type 1" evidence="3">
    <location>
        <begin position="58"/>
        <end position="146"/>
    </location>
</feature>
<feature type="domain" description="PPIase FKBP-type 2" evidence="3">
    <location>
        <begin position="170"/>
        <end position="258"/>
    </location>
</feature>
<feature type="domain" description="PPIase FKBP-type 3" evidence="3">
    <location>
        <begin position="282"/>
        <end position="369"/>
    </location>
</feature>
<feature type="domain" description="PPIase FKBP-type 4" evidence="3">
    <location>
        <begin position="393"/>
        <end position="481"/>
    </location>
</feature>
<feature type="domain" description="EF-hand 1" evidence="4">
    <location>
        <begin position="492"/>
        <end position="527"/>
    </location>
</feature>
<feature type="domain" description="EF-hand 2" evidence="4">
    <location>
        <begin position="537"/>
        <end position="572"/>
    </location>
</feature>
<feature type="short sequence motif" description="Prevents secretion from ER" evidence="5">
    <location>
        <begin position="571"/>
        <end position="574"/>
    </location>
</feature>
<feature type="binding site" evidence="6">
    <location>
        <position position="505"/>
    </location>
    <ligand>
        <name>Ca(2+)</name>
        <dbReference type="ChEBI" id="CHEBI:29108"/>
        <label>1</label>
    </ligand>
</feature>
<feature type="binding site" evidence="6">
    <location>
        <position position="507"/>
    </location>
    <ligand>
        <name>Ca(2+)</name>
        <dbReference type="ChEBI" id="CHEBI:29108"/>
        <label>1</label>
    </ligand>
</feature>
<feature type="binding site" evidence="6">
    <location>
        <position position="509"/>
    </location>
    <ligand>
        <name>Ca(2+)</name>
        <dbReference type="ChEBI" id="CHEBI:29108"/>
        <label>1</label>
    </ligand>
</feature>
<feature type="binding site" evidence="6">
    <location>
        <position position="511"/>
    </location>
    <ligand>
        <name>Ca(2+)</name>
        <dbReference type="ChEBI" id="CHEBI:29108"/>
        <label>1</label>
    </ligand>
</feature>
<feature type="binding site" evidence="6">
    <location>
        <position position="516"/>
    </location>
    <ligand>
        <name>Ca(2+)</name>
        <dbReference type="ChEBI" id="CHEBI:29108"/>
        <label>1</label>
    </ligand>
</feature>
<feature type="binding site" evidence="4">
    <location>
        <position position="550"/>
    </location>
    <ligand>
        <name>Ca(2+)</name>
        <dbReference type="ChEBI" id="CHEBI:29108"/>
        <label>2</label>
    </ligand>
</feature>
<feature type="binding site" evidence="4">
    <location>
        <position position="552"/>
    </location>
    <ligand>
        <name>Ca(2+)</name>
        <dbReference type="ChEBI" id="CHEBI:29108"/>
        <label>2</label>
    </ligand>
</feature>
<feature type="binding site" evidence="4">
    <location>
        <position position="554"/>
    </location>
    <ligand>
        <name>Ca(2+)</name>
        <dbReference type="ChEBI" id="CHEBI:29108"/>
        <label>2</label>
    </ligand>
</feature>
<feature type="binding site" evidence="4">
    <location>
        <position position="556"/>
    </location>
    <ligand>
        <name>Ca(2+)</name>
        <dbReference type="ChEBI" id="CHEBI:29108"/>
        <label>2</label>
    </ligand>
</feature>
<feature type="binding site" evidence="4">
    <location>
        <position position="561"/>
    </location>
    <ligand>
        <name>Ca(2+)</name>
        <dbReference type="ChEBI" id="CHEBI:29108"/>
        <label>2</label>
    </ligand>
</feature>
<feature type="glycosylation site" description="N-linked (GlcNAc...) asparagine" evidence="2">
    <location>
        <position position="178"/>
    </location>
</feature>
<feature type="glycosylation site" description="N-linked (GlcNAc...) asparagine" evidence="2">
    <location>
        <position position="290"/>
    </location>
</feature>
<feature type="glycosylation site" description="N-linked (GlcNAc...) asparagine" evidence="2">
    <location>
        <position position="306"/>
    </location>
</feature>
<feature type="glycosylation site" description="N-linked (GlcNAc...) asparagine" evidence="2">
    <location>
        <position position="401"/>
    </location>
</feature>
<comment type="function">
    <text evidence="1">PPIases accelerate the folding of proteins during protein synthesis.</text>
</comment>
<comment type="catalytic activity">
    <reaction>
        <text>[protein]-peptidylproline (omega=180) = [protein]-peptidylproline (omega=0)</text>
        <dbReference type="Rhea" id="RHEA:16237"/>
        <dbReference type="Rhea" id="RHEA-COMP:10747"/>
        <dbReference type="Rhea" id="RHEA-COMP:10748"/>
        <dbReference type="ChEBI" id="CHEBI:83833"/>
        <dbReference type="ChEBI" id="CHEBI:83834"/>
        <dbReference type="EC" id="5.2.1.8"/>
    </reaction>
</comment>
<comment type="activity regulation">
    <text evidence="1">Inhibited by FK506.</text>
</comment>
<comment type="subcellular location">
    <subcellularLocation>
        <location evidence="5">Endoplasmic reticulum</location>
    </subcellularLocation>
</comment>
<comment type="PTM">
    <text evidence="1">Phosphorylated.</text>
</comment>
<organism>
    <name type="scientific">Bos taurus</name>
    <name type="common">Bovine</name>
    <dbReference type="NCBI Taxonomy" id="9913"/>
    <lineage>
        <taxon>Eukaryota</taxon>
        <taxon>Metazoa</taxon>
        <taxon>Chordata</taxon>
        <taxon>Craniata</taxon>
        <taxon>Vertebrata</taxon>
        <taxon>Euteleostomi</taxon>
        <taxon>Mammalia</taxon>
        <taxon>Eutheria</taxon>
        <taxon>Laurasiatheria</taxon>
        <taxon>Artiodactyla</taxon>
        <taxon>Ruminantia</taxon>
        <taxon>Pecora</taxon>
        <taxon>Bovidae</taxon>
        <taxon>Bovinae</taxon>
        <taxon>Bos</taxon>
    </lineage>
</organism>
<reference key="1">
    <citation type="submission" date="2005-09" db="EMBL/GenBank/DDBJ databases">
        <authorList>
            <consortium name="NIH - Mammalian Gene Collection (MGC) project"/>
        </authorList>
    </citation>
    <scope>NUCLEOTIDE SEQUENCE [LARGE SCALE MRNA]</scope>
    <source>
        <strain>Hereford</strain>
        <tissue>Heart ventricle</tissue>
    </source>
</reference>
<proteinExistence type="evidence at transcript level"/>
<protein>
    <recommendedName>
        <fullName>Peptidyl-prolyl cis-trans isomerase FKBP9</fullName>
        <shortName>PPIase FKBP9</shortName>
        <ecNumber>5.2.1.8</ecNumber>
    </recommendedName>
    <alternativeName>
        <fullName>FK506-binding protein 9</fullName>
        <shortName>FKBP-9</shortName>
    </alternativeName>
    <alternativeName>
        <fullName>Rotamase</fullName>
    </alternativeName>
</protein>
<name>FKBP9_BOVIN</name>
<sequence length="574" mass="63535">MAIRARSWRPPPPPLLLLLLWVTGQAAPVAGLGLGSDSELQIERRFVPEECPRTVRSGDFVRYHYVGTFPDGQKFDSSYDRDSTFNVFVGKGQLIAGMDQALVGMCVNERRFVKIPPKLAYGSDGVSGVIPPDSVLHFDVLLMDIWNSEDQVQIHTYFKPPSCPRTIQVSDFVRYHYNGTFLDGTLFDSSHNRMKTYDTYVGIGWLIPGMDKGLLGMCVGEKRIITIPPFLAYGEDGDGKDIPGQASLVFDVALLDLHNPKDGISIENKVVPENCERRSQSGDFLRYHYNGTLLDGTFFDSSYSRNRTFDTYIGQGYVIPGIDEGLLGVCIGEKRRIVVPPHLGYGEEGRGNIPGSAVLVFDIHVIDFHNPSDSISITSHYKPPDCSVLSKKGDYLKYHYNASLLDGTLLDSTWNLGKTYNIVLGFGQVVLGMDMGLREMCVGEKRTVIIPPHLGYGEAGVDGEVPGSAVLVFDIELLELVAGLPEGYMFVWNGEVSANLFEEIDKDGDGEVLLEEFSEYIHAQVASGKGKLAPGFDAEMIVKNMFTNQDRNGDGKVTAEEFKLKDQETKHDEL</sequence>